<keyword id="KW-0028">Amino-acid biosynthesis</keyword>
<keyword id="KW-0057">Aromatic amino acid biosynthesis</keyword>
<keyword id="KW-0521">NADP</keyword>
<keyword id="KW-0560">Oxidoreductase</keyword>
<keyword id="KW-1185">Reference proteome</keyword>
<name>AROE_CAUVN</name>
<reference key="1">
    <citation type="journal article" date="2010" name="J. Bacteriol.">
        <title>The genetic basis of laboratory adaptation in Caulobacter crescentus.</title>
        <authorList>
            <person name="Marks M.E."/>
            <person name="Castro-Rojas C.M."/>
            <person name="Teiling C."/>
            <person name="Du L."/>
            <person name="Kapatral V."/>
            <person name="Walunas T.L."/>
            <person name="Crosson S."/>
        </authorList>
    </citation>
    <scope>NUCLEOTIDE SEQUENCE [LARGE SCALE GENOMIC DNA]</scope>
    <source>
        <strain>NA1000 / CB15N</strain>
    </source>
</reference>
<evidence type="ECO:0000255" key="1">
    <source>
        <dbReference type="HAMAP-Rule" id="MF_00222"/>
    </source>
</evidence>
<accession>B8GWW0</accession>
<sequence>MTNAITGAAIVGGVCGQPIKHSMSPVIHNAWIAAAGLDAAYVPFAPAADRFETFVDGLRGGAVRGLNVTIPFKERALAVADTASDLARMAGAANLLVFNEDGSVHADNTDGPGLLGAIAIQAPGFDVTAAPVVILGAGGAARGAVAALLLAGAPRIAVVNRTVARAQDLADTFGEKVVAKGEDALPALLPEAGLIINATSLGLGGGAGPSADLTLTPKTAVVMDMVYKPLRTEFLRRAEAAGRRTVDGLEMLLRQAIPTFETIYGQAPSPKIDVRVLALKLLGEV</sequence>
<protein>
    <recommendedName>
        <fullName evidence="1">Shikimate dehydrogenase (NADP(+))</fullName>
        <shortName evidence="1">SDH</shortName>
        <ecNumber evidence="1">1.1.1.25</ecNumber>
    </recommendedName>
</protein>
<dbReference type="EC" id="1.1.1.25" evidence="1"/>
<dbReference type="EMBL" id="CP001340">
    <property type="protein sequence ID" value="ACL93470.1"/>
    <property type="molecule type" value="Genomic_DNA"/>
</dbReference>
<dbReference type="RefSeq" id="WP_010917894.1">
    <property type="nucleotide sequence ID" value="NC_011916.1"/>
</dbReference>
<dbReference type="RefSeq" id="YP_002515378.1">
    <property type="nucleotide sequence ID" value="NC_011916.1"/>
</dbReference>
<dbReference type="SMR" id="B8GWW0"/>
<dbReference type="GeneID" id="7333144"/>
<dbReference type="KEGG" id="ccs:CCNA_00003"/>
<dbReference type="PATRIC" id="fig|565050.3.peg.3"/>
<dbReference type="HOGENOM" id="CLU_044063_2_0_5"/>
<dbReference type="OrthoDB" id="9792692at2"/>
<dbReference type="PhylomeDB" id="B8GWW0"/>
<dbReference type="UniPathway" id="UPA00053">
    <property type="reaction ID" value="UER00087"/>
</dbReference>
<dbReference type="Proteomes" id="UP000001364">
    <property type="component" value="Chromosome"/>
</dbReference>
<dbReference type="GO" id="GO:0005829">
    <property type="term" value="C:cytosol"/>
    <property type="evidence" value="ECO:0007669"/>
    <property type="project" value="TreeGrafter"/>
</dbReference>
<dbReference type="GO" id="GO:0050661">
    <property type="term" value="F:NADP binding"/>
    <property type="evidence" value="ECO:0007669"/>
    <property type="project" value="InterPro"/>
</dbReference>
<dbReference type="GO" id="GO:0004764">
    <property type="term" value="F:shikimate 3-dehydrogenase (NADP+) activity"/>
    <property type="evidence" value="ECO:0007669"/>
    <property type="project" value="UniProtKB-UniRule"/>
</dbReference>
<dbReference type="GO" id="GO:0008652">
    <property type="term" value="P:amino acid biosynthetic process"/>
    <property type="evidence" value="ECO:0007669"/>
    <property type="project" value="UniProtKB-KW"/>
</dbReference>
<dbReference type="GO" id="GO:0009073">
    <property type="term" value="P:aromatic amino acid family biosynthetic process"/>
    <property type="evidence" value="ECO:0007669"/>
    <property type="project" value="UniProtKB-KW"/>
</dbReference>
<dbReference type="GO" id="GO:0009423">
    <property type="term" value="P:chorismate biosynthetic process"/>
    <property type="evidence" value="ECO:0007669"/>
    <property type="project" value="UniProtKB-UniRule"/>
</dbReference>
<dbReference type="GO" id="GO:0019632">
    <property type="term" value="P:shikimate metabolic process"/>
    <property type="evidence" value="ECO:0007669"/>
    <property type="project" value="InterPro"/>
</dbReference>
<dbReference type="CDD" id="cd01065">
    <property type="entry name" value="NAD_bind_Shikimate_DH"/>
    <property type="match status" value="1"/>
</dbReference>
<dbReference type="Gene3D" id="3.40.50.10860">
    <property type="entry name" value="Leucine Dehydrogenase, chain A, domain 1"/>
    <property type="match status" value="1"/>
</dbReference>
<dbReference type="Gene3D" id="3.40.50.720">
    <property type="entry name" value="NAD(P)-binding Rossmann-like Domain"/>
    <property type="match status" value="1"/>
</dbReference>
<dbReference type="HAMAP" id="MF_00222">
    <property type="entry name" value="Shikimate_DH_AroE"/>
    <property type="match status" value="1"/>
</dbReference>
<dbReference type="InterPro" id="IPR046346">
    <property type="entry name" value="Aminoacid_DH-like_N_sf"/>
</dbReference>
<dbReference type="InterPro" id="IPR036291">
    <property type="entry name" value="NAD(P)-bd_dom_sf"/>
</dbReference>
<dbReference type="InterPro" id="IPR011342">
    <property type="entry name" value="Shikimate_DH"/>
</dbReference>
<dbReference type="InterPro" id="IPR013708">
    <property type="entry name" value="Shikimate_DH-bd_N"/>
</dbReference>
<dbReference type="InterPro" id="IPR022893">
    <property type="entry name" value="Shikimate_DH_fam"/>
</dbReference>
<dbReference type="InterPro" id="IPR006151">
    <property type="entry name" value="Shikm_DH/Glu-tRNA_Rdtase"/>
</dbReference>
<dbReference type="NCBIfam" id="TIGR00507">
    <property type="entry name" value="aroE"/>
    <property type="match status" value="1"/>
</dbReference>
<dbReference type="PANTHER" id="PTHR21089:SF1">
    <property type="entry name" value="BIFUNCTIONAL 3-DEHYDROQUINATE DEHYDRATASE_SHIKIMATE DEHYDROGENASE, CHLOROPLASTIC"/>
    <property type="match status" value="1"/>
</dbReference>
<dbReference type="PANTHER" id="PTHR21089">
    <property type="entry name" value="SHIKIMATE DEHYDROGENASE"/>
    <property type="match status" value="1"/>
</dbReference>
<dbReference type="Pfam" id="PF01488">
    <property type="entry name" value="Shikimate_DH"/>
    <property type="match status" value="1"/>
</dbReference>
<dbReference type="Pfam" id="PF08501">
    <property type="entry name" value="Shikimate_dh_N"/>
    <property type="match status" value="1"/>
</dbReference>
<dbReference type="SUPFAM" id="SSF53223">
    <property type="entry name" value="Aminoacid dehydrogenase-like, N-terminal domain"/>
    <property type="match status" value="1"/>
</dbReference>
<dbReference type="SUPFAM" id="SSF51735">
    <property type="entry name" value="NAD(P)-binding Rossmann-fold domains"/>
    <property type="match status" value="1"/>
</dbReference>
<organism>
    <name type="scientific">Caulobacter vibrioides (strain NA1000 / CB15N)</name>
    <name type="common">Caulobacter crescentus</name>
    <dbReference type="NCBI Taxonomy" id="565050"/>
    <lineage>
        <taxon>Bacteria</taxon>
        <taxon>Pseudomonadati</taxon>
        <taxon>Pseudomonadota</taxon>
        <taxon>Alphaproteobacteria</taxon>
        <taxon>Caulobacterales</taxon>
        <taxon>Caulobacteraceae</taxon>
        <taxon>Caulobacter</taxon>
    </lineage>
</organism>
<gene>
    <name evidence="1" type="primary">aroE</name>
    <name type="ordered locus">CCNA_00003</name>
</gene>
<feature type="chain" id="PRO_1000124879" description="Shikimate dehydrogenase (NADP(+))">
    <location>
        <begin position="1"/>
        <end position="285"/>
    </location>
</feature>
<feature type="active site" description="Proton acceptor" evidence="1">
    <location>
        <position position="73"/>
    </location>
</feature>
<feature type="binding site" evidence="1">
    <location>
        <begin position="22"/>
        <end position="24"/>
    </location>
    <ligand>
        <name>shikimate</name>
        <dbReference type="ChEBI" id="CHEBI:36208"/>
    </ligand>
</feature>
<feature type="binding site" evidence="1">
    <location>
        <position position="69"/>
    </location>
    <ligand>
        <name>shikimate</name>
        <dbReference type="ChEBI" id="CHEBI:36208"/>
    </ligand>
</feature>
<feature type="binding site" evidence="1">
    <location>
        <position position="85"/>
    </location>
    <ligand>
        <name>NADP(+)</name>
        <dbReference type="ChEBI" id="CHEBI:58349"/>
    </ligand>
</feature>
<feature type="binding site" evidence="1">
    <location>
        <position position="94"/>
    </location>
    <ligand>
        <name>shikimate</name>
        <dbReference type="ChEBI" id="CHEBI:36208"/>
    </ligand>
</feature>
<feature type="binding site" evidence="1">
    <location>
        <position position="110"/>
    </location>
    <ligand>
        <name>shikimate</name>
        <dbReference type="ChEBI" id="CHEBI:36208"/>
    </ligand>
</feature>
<feature type="binding site" evidence="1">
    <location>
        <begin position="136"/>
        <end position="140"/>
    </location>
    <ligand>
        <name>NADP(+)</name>
        <dbReference type="ChEBI" id="CHEBI:58349"/>
    </ligand>
</feature>
<feature type="binding site" evidence="1">
    <location>
        <begin position="160"/>
        <end position="165"/>
    </location>
    <ligand>
        <name>NADP(+)</name>
        <dbReference type="ChEBI" id="CHEBI:58349"/>
    </ligand>
</feature>
<feature type="binding site" evidence="1">
    <location>
        <position position="225"/>
    </location>
    <ligand>
        <name>NADP(+)</name>
        <dbReference type="ChEBI" id="CHEBI:58349"/>
    </ligand>
</feature>
<feature type="binding site" evidence="1">
    <location>
        <position position="227"/>
    </location>
    <ligand>
        <name>shikimate</name>
        <dbReference type="ChEBI" id="CHEBI:36208"/>
    </ligand>
</feature>
<feature type="binding site" evidence="1">
    <location>
        <position position="248"/>
    </location>
    <ligand>
        <name>NADP(+)</name>
        <dbReference type="ChEBI" id="CHEBI:58349"/>
    </ligand>
</feature>
<comment type="function">
    <text evidence="1">Involved in the biosynthesis of the chorismate, which leads to the biosynthesis of aromatic amino acids. Catalyzes the reversible NADPH linked reduction of 3-dehydroshikimate (DHSA) to yield shikimate (SA).</text>
</comment>
<comment type="catalytic activity">
    <reaction evidence="1">
        <text>shikimate + NADP(+) = 3-dehydroshikimate + NADPH + H(+)</text>
        <dbReference type="Rhea" id="RHEA:17737"/>
        <dbReference type="ChEBI" id="CHEBI:15378"/>
        <dbReference type="ChEBI" id="CHEBI:16630"/>
        <dbReference type="ChEBI" id="CHEBI:36208"/>
        <dbReference type="ChEBI" id="CHEBI:57783"/>
        <dbReference type="ChEBI" id="CHEBI:58349"/>
        <dbReference type="EC" id="1.1.1.25"/>
    </reaction>
</comment>
<comment type="pathway">
    <text evidence="1">Metabolic intermediate biosynthesis; chorismate biosynthesis; chorismate from D-erythrose 4-phosphate and phosphoenolpyruvate: step 4/7.</text>
</comment>
<comment type="subunit">
    <text evidence="1">Homodimer.</text>
</comment>
<comment type="similarity">
    <text evidence="1">Belongs to the shikimate dehydrogenase family.</text>
</comment>
<proteinExistence type="inferred from homology"/>